<gene>
    <name evidence="1" type="primary">greA</name>
    <name type="ordered locus">STER_0289</name>
</gene>
<evidence type="ECO:0000255" key="1">
    <source>
        <dbReference type="HAMAP-Rule" id="MF_00105"/>
    </source>
</evidence>
<sequence>MAEKTYVMTLAEKKQLEAELEEYKLVRRPEVVERIKIARSYGDLSENSEYEAAKDEQAFVEGQIQILETKIRYAEIVDSDAVANDEVAIGKTVVVQEVGTSDKDTYHIVGAAGADIFSGKISNESPIAQALIGKKVGDKVAIESPAGSYSVEILSVEKTS</sequence>
<accession>Q03MH4</accession>
<feature type="chain" id="PRO_1000034315" description="Transcription elongation factor GreA">
    <location>
        <begin position="1"/>
        <end position="160"/>
    </location>
</feature>
<feature type="coiled-coil region" evidence="1">
    <location>
        <begin position="1"/>
        <end position="72"/>
    </location>
</feature>
<protein>
    <recommendedName>
        <fullName evidence="1">Transcription elongation factor GreA</fullName>
    </recommendedName>
    <alternativeName>
        <fullName evidence="1">Transcript cleavage factor GreA</fullName>
    </alternativeName>
</protein>
<keyword id="KW-0175">Coiled coil</keyword>
<keyword id="KW-0238">DNA-binding</keyword>
<keyword id="KW-0804">Transcription</keyword>
<keyword id="KW-0805">Transcription regulation</keyword>
<organism>
    <name type="scientific">Streptococcus thermophilus (strain ATCC BAA-491 / LMD-9)</name>
    <dbReference type="NCBI Taxonomy" id="322159"/>
    <lineage>
        <taxon>Bacteria</taxon>
        <taxon>Bacillati</taxon>
        <taxon>Bacillota</taxon>
        <taxon>Bacilli</taxon>
        <taxon>Lactobacillales</taxon>
        <taxon>Streptococcaceae</taxon>
        <taxon>Streptococcus</taxon>
    </lineage>
</organism>
<reference key="1">
    <citation type="journal article" date="2006" name="Proc. Natl. Acad. Sci. U.S.A.">
        <title>Comparative genomics of the lactic acid bacteria.</title>
        <authorList>
            <person name="Makarova K.S."/>
            <person name="Slesarev A."/>
            <person name="Wolf Y.I."/>
            <person name="Sorokin A."/>
            <person name="Mirkin B."/>
            <person name="Koonin E.V."/>
            <person name="Pavlov A."/>
            <person name="Pavlova N."/>
            <person name="Karamychev V."/>
            <person name="Polouchine N."/>
            <person name="Shakhova V."/>
            <person name="Grigoriev I."/>
            <person name="Lou Y."/>
            <person name="Rohksar D."/>
            <person name="Lucas S."/>
            <person name="Huang K."/>
            <person name="Goodstein D.M."/>
            <person name="Hawkins T."/>
            <person name="Plengvidhya V."/>
            <person name="Welker D."/>
            <person name="Hughes J."/>
            <person name="Goh Y."/>
            <person name="Benson A."/>
            <person name="Baldwin K."/>
            <person name="Lee J.-H."/>
            <person name="Diaz-Muniz I."/>
            <person name="Dosti B."/>
            <person name="Smeianov V."/>
            <person name="Wechter W."/>
            <person name="Barabote R."/>
            <person name="Lorca G."/>
            <person name="Altermann E."/>
            <person name="Barrangou R."/>
            <person name="Ganesan B."/>
            <person name="Xie Y."/>
            <person name="Rawsthorne H."/>
            <person name="Tamir D."/>
            <person name="Parker C."/>
            <person name="Breidt F."/>
            <person name="Broadbent J.R."/>
            <person name="Hutkins R."/>
            <person name="O'Sullivan D."/>
            <person name="Steele J."/>
            <person name="Unlu G."/>
            <person name="Saier M.H. Jr."/>
            <person name="Klaenhammer T."/>
            <person name="Richardson P."/>
            <person name="Kozyavkin S."/>
            <person name="Weimer B.C."/>
            <person name="Mills D.A."/>
        </authorList>
    </citation>
    <scope>NUCLEOTIDE SEQUENCE [LARGE SCALE GENOMIC DNA]</scope>
    <source>
        <strain>ATCC BAA-491 / LMD-9</strain>
    </source>
</reference>
<comment type="function">
    <text evidence="1">Necessary for efficient RNA polymerase transcription elongation past template-encoded arresting sites. The arresting sites in DNA have the property of trapping a certain fraction of elongating RNA polymerases that pass through, resulting in locked ternary complexes. Cleavage of the nascent transcript by cleavage factors such as GreA or GreB allows the resumption of elongation from the new 3'terminus. GreA releases sequences of 2 to 3 nucleotides.</text>
</comment>
<comment type="similarity">
    <text evidence="1">Belongs to the GreA/GreB family.</text>
</comment>
<proteinExistence type="inferred from homology"/>
<dbReference type="EMBL" id="CP000419">
    <property type="protein sequence ID" value="ABJ65598.1"/>
    <property type="molecule type" value="Genomic_DNA"/>
</dbReference>
<dbReference type="RefSeq" id="WP_011680708.1">
    <property type="nucleotide sequence ID" value="NC_008532.1"/>
</dbReference>
<dbReference type="SMR" id="Q03MH4"/>
<dbReference type="KEGG" id="ste:STER_0289"/>
<dbReference type="HOGENOM" id="CLU_101379_2_1_9"/>
<dbReference type="GO" id="GO:0003677">
    <property type="term" value="F:DNA binding"/>
    <property type="evidence" value="ECO:0007669"/>
    <property type="project" value="UniProtKB-UniRule"/>
</dbReference>
<dbReference type="GO" id="GO:0070063">
    <property type="term" value="F:RNA polymerase binding"/>
    <property type="evidence" value="ECO:0007669"/>
    <property type="project" value="InterPro"/>
</dbReference>
<dbReference type="GO" id="GO:0006354">
    <property type="term" value="P:DNA-templated transcription elongation"/>
    <property type="evidence" value="ECO:0007669"/>
    <property type="project" value="TreeGrafter"/>
</dbReference>
<dbReference type="GO" id="GO:0032784">
    <property type="term" value="P:regulation of DNA-templated transcription elongation"/>
    <property type="evidence" value="ECO:0007669"/>
    <property type="project" value="UniProtKB-UniRule"/>
</dbReference>
<dbReference type="FunFam" id="1.10.287.180:FF:000001">
    <property type="entry name" value="Transcription elongation factor GreA"/>
    <property type="match status" value="1"/>
</dbReference>
<dbReference type="FunFam" id="3.10.50.30:FF:000001">
    <property type="entry name" value="Transcription elongation factor GreA"/>
    <property type="match status" value="1"/>
</dbReference>
<dbReference type="Gene3D" id="3.10.50.30">
    <property type="entry name" value="Transcription elongation factor, GreA/GreB, C-terminal domain"/>
    <property type="match status" value="1"/>
</dbReference>
<dbReference type="Gene3D" id="1.10.287.180">
    <property type="entry name" value="Transcription elongation factor, GreA/GreB, N-terminal domain"/>
    <property type="match status" value="1"/>
</dbReference>
<dbReference type="HAMAP" id="MF_00105">
    <property type="entry name" value="GreA_GreB"/>
    <property type="match status" value="1"/>
</dbReference>
<dbReference type="InterPro" id="IPR036953">
    <property type="entry name" value="GreA/GreB_C_sf"/>
</dbReference>
<dbReference type="InterPro" id="IPR018151">
    <property type="entry name" value="TF_GreA/GreB_CS"/>
</dbReference>
<dbReference type="InterPro" id="IPR006359">
    <property type="entry name" value="Tscrpt_elong_fac_GreA"/>
</dbReference>
<dbReference type="InterPro" id="IPR028624">
    <property type="entry name" value="Tscrpt_elong_fac_GreA/B"/>
</dbReference>
<dbReference type="InterPro" id="IPR001437">
    <property type="entry name" value="Tscrpt_elong_fac_GreA/B_C"/>
</dbReference>
<dbReference type="InterPro" id="IPR023459">
    <property type="entry name" value="Tscrpt_elong_fac_GreA/B_fam"/>
</dbReference>
<dbReference type="InterPro" id="IPR022691">
    <property type="entry name" value="Tscrpt_elong_fac_GreA/B_N"/>
</dbReference>
<dbReference type="InterPro" id="IPR036805">
    <property type="entry name" value="Tscrpt_elong_fac_GreA/B_N_sf"/>
</dbReference>
<dbReference type="NCBIfam" id="TIGR01462">
    <property type="entry name" value="greA"/>
    <property type="match status" value="1"/>
</dbReference>
<dbReference type="NCBIfam" id="NF001260">
    <property type="entry name" value="PRK00226.1-1"/>
    <property type="match status" value="1"/>
</dbReference>
<dbReference type="NCBIfam" id="NF001263">
    <property type="entry name" value="PRK00226.1-4"/>
    <property type="match status" value="1"/>
</dbReference>
<dbReference type="PANTHER" id="PTHR30437">
    <property type="entry name" value="TRANSCRIPTION ELONGATION FACTOR GREA"/>
    <property type="match status" value="1"/>
</dbReference>
<dbReference type="PANTHER" id="PTHR30437:SF4">
    <property type="entry name" value="TRANSCRIPTION ELONGATION FACTOR GREA"/>
    <property type="match status" value="1"/>
</dbReference>
<dbReference type="Pfam" id="PF01272">
    <property type="entry name" value="GreA_GreB"/>
    <property type="match status" value="1"/>
</dbReference>
<dbReference type="Pfam" id="PF03449">
    <property type="entry name" value="GreA_GreB_N"/>
    <property type="match status" value="1"/>
</dbReference>
<dbReference type="PIRSF" id="PIRSF006092">
    <property type="entry name" value="GreA_GreB"/>
    <property type="match status" value="1"/>
</dbReference>
<dbReference type="SUPFAM" id="SSF54534">
    <property type="entry name" value="FKBP-like"/>
    <property type="match status" value="1"/>
</dbReference>
<dbReference type="SUPFAM" id="SSF46557">
    <property type="entry name" value="GreA transcript cleavage protein, N-terminal domain"/>
    <property type="match status" value="1"/>
</dbReference>
<dbReference type="PROSITE" id="PS00829">
    <property type="entry name" value="GREAB_1"/>
    <property type="match status" value="1"/>
</dbReference>
<dbReference type="PROSITE" id="PS00830">
    <property type="entry name" value="GREAB_2"/>
    <property type="match status" value="1"/>
</dbReference>
<name>GREA_STRTD</name>